<sequence length="415" mass="45766">MNSLPESGSDGQSSADPSQKATSLPRYGRVIWILAGEASGDVIGARLMQALHAQDPSLVFAGVGGGRMEALGLHSLFPMSDLAVMGLVEVVPRLRQLSQRLLEAVQDIELRKPDLVVTIDSPGFTLRLLQKIERSGIKRVHYVAPQVWAWRENRVKEFPGLWDRLLCLLPFEPDWFAQRGLEGRFVGHPVLQSGVRQGNAQRFRLRHNIPAHAPVVILMPGSRRSEAPRLLPVFRKMLDILRVQYPDICPVIPVAPVIAPTIRQLIRKWPIQPHIVTDIHDKHDAFAAAQCALTKSGTSTLELAMGNVPMAVTYRVNPVTATIARRLIKVPHVAMVNLLAGREVVPELLQENCTPKKLAETVSKLLSDPQMVEKQRMAFADVLDKLSPPVGTPADAAAAEIMDLLNEPVSRSSRS</sequence>
<comment type="function">
    <text evidence="1">Condensation of UDP-2,3-diacylglucosamine and 2,3-diacylglucosamine-1-phosphate to form lipid A disaccharide, a precursor of lipid A, a phosphorylated glycolipid that anchors the lipopolysaccharide to the outer membrane of the cell.</text>
</comment>
<comment type="catalytic activity">
    <reaction evidence="1">
        <text>a lipid X + a UDP-2-N,3-O-bis[(3R)-3-hydroxyacyl]-alpha-D-glucosamine = a lipid A disaccharide + UDP + H(+)</text>
        <dbReference type="Rhea" id="RHEA:67828"/>
        <dbReference type="ChEBI" id="CHEBI:15378"/>
        <dbReference type="ChEBI" id="CHEBI:58223"/>
        <dbReference type="ChEBI" id="CHEBI:137748"/>
        <dbReference type="ChEBI" id="CHEBI:176338"/>
        <dbReference type="ChEBI" id="CHEBI:176343"/>
        <dbReference type="EC" id="2.4.1.182"/>
    </reaction>
</comment>
<comment type="pathway">
    <text evidence="1">Bacterial outer membrane biogenesis; LPS lipid A biosynthesis.</text>
</comment>
<comment type="similarity">
    <text evidence="1">Belongs to the LpxB family.</text>
</comment>
<protein>
    <recommendedName>
        <fullName evidence="1">Lipid-A-disaccharide synthase</fullName>
        <ecNumber evidence="1">2.4.1.182</ecNumber>
    </recommendedName>
</protein>
<feature type="chain" id="PRO_0000255185" description="Lipid-A-disaccharide synthase">
    <location>
        <begin position="1"/>
        <end position="415"/>
    </location>
</feature>
<feature type="region of interest" description="Disordered" evidence="2">
    <location>
        <begin position="1"/>
        <end position="21"/>
    </location>
</feature>
<gene>
    <name evidence="1" type="primary">lpxB</name>
    <name type="ordered locus">GOX0260</name>
</gene>
<evidence type="ECO:0000255" key="1">
    <source>
        <dbReference type="HAMAP-Rule" id="MF_00392"/>
    </source>
</evidence>
<evidence type="ECO:0000256" key="2">
    <source>
        <dbReference type="SAM" id="MobiDB-lite"/>
    </source>
</evidence>
<organism>
    <name type="scientific">Gluconobacter oxydans (strain 621H)</name>
    <name type="common">Gluconobacter suboxydans</name>
    <dbReference type="NCBI Taxonomy" id="290633"/>
    <lineage>
        <taxon>Bacteria</taxon>
        <taxon>Pseudomonadati</taxon>
        <taxon>Pseudomonadota</taxon>
        <taxon>Alphaproteobacteria</taxon>
        <taxon>Acetobacterales</taxon>
        <taxon>Acetobacteraceae</taxon>
        <taxon>Gluconobacter</taxon>
    </lineage>
</organism>
<accession>Q5FUA3</accession>
<reference key="1">
    <citation type="journal article" date="2005" name="Nat. Biotechnol.">
        <title>Complete genome sequence of the acetic acid bacterium Gluconobacter oxydans.</title>
        <authorList>
            <person name="Prust C."/>
            <person name="Hoffmeister M."/>
            <person name="Liesegang H."/>
            <person name="Wiezer A."/>
            <person name="Fricke W.F."/>
            <person name="Ehrenreich A."/>
            <person name="Gottschalk G."/>
            <person name="Deppenmeier U."/>
        </authorList>
    </citation>
    <scope>NUCLEOTIDE SEQUENCE [LARGE SCALE GENOMIC DNA]</scope>
    <source>
        <strain>621H</strain>
    </source>
</reference>
<keyword id="KW-0328">Glycosyltransferase</keyword>
<keyword id="KW-0441">Lipid A biosynthesis</keyword>
<keyword id="KW-0444">Lipid biosynthesis</keyword>
<keyword id="KW-0443">Lipid metabolism</keyword>
<keyword id="KW-1185">Reference proteome</keyword>
<keyword id="KW-0808">Transferase</keyword>
<dbReference type="EC" id="2.4.1.182" evidence="1"/>
<dbReference type="EMBL" id="CP000009">
    <property type="protein sequence ID" value="AAW60043.1"/>
    <property type="molecule type" value="Genomic_DNA"/>
</dbReference>
<dbReference type="RefSeq" id="WP_011251846.1">
    <property type="nucleotide sequence ID" value="NC_006677.1"/>
</dbReference>
<dbReference type="SMR" id="Q5FUA3"/>
<dbReference type="STRING" id="290633.GOX0260"/>
<dbReference type="CAZy" id="GT19">
    <property type="family name" value="Glycosyltransferase Family 19"/>
</dbReference>
<dbReference type="KEGG" id="gox:GOX0260"/>
<dbReference type="eggNOG" id="COG0763">
    <property type="taxonomic scope" value="Bacteria"/>
</dbReference>
<dbReference type="HOGENOM" id="CLU_036577_3_0_5"/>
<dbReference type="UniPathway" id="UPA00973"/>
<dbReference type="Proteomes" id="UP000006375">
    <property type="component" value="Chromosome"/>
</dbReference>
<dbReference type="GO" id="GO:0016020">
    <property type="term" value="C:membrane"/>
    <property type="evidence" value="ECO:0007669"/>
    <property type="project" value="GOC"/>
</dbReference>
<dbReference type="GO" id="GO:0008915">
    <property type="term" value="F:lipid-A-disaccharide synthase activity"/>
    <property type="evidence" value="ECO:0007669"/>
    <property type="project" value="UniProtKB-UniRule"/>
</dbReference>
<dbReference type="GO" id="GO:0005543">
    <property type="term" value="F:phospholipid binding"/>
    <property type="evidence" value="ECO:0007669"/>
    <property type="project" value="TreeGrafter"/>
</dbReference>
<dbReference type="GO" id="GO:0009245">
    <property type="term" value="P:lipid A biosynthetic process"/>
    <property type="evidence" value="ECO:0007669"/>
    <property type="project" value="UniProtKB-UniRule"/>
</dbReference>
<dbReference type="Gene3D" id="3.40.50.2000">
    <property type="entry name" value="Glycogen Phosphorylase B"/>
    <property type="match status" value="1"/>
</dbReference>
<dbReference type="HAMAP" id="MF_00392">
    <property type="entry name" value="LpxB"/>
    <property type="match status" value="1"/>
</dbReference>
<dbReference type="InterPro" id="IPR003835">
    <property type="entry name" value="Glyco_trans_19"/>
</dbReference>
<dbReference type="NCBIfam" id="TIGR00215">
    <property type="entry name" value="lpxB"/>
    <property type="match status" value="1"/>
</dbReference>
<dbReference type="PANTHER" id="PTHR30372">
    <property type="entry name" value="LIPID-A-DISACCHARIDE SYNTHASE"/>
    <property type="match status" value="1"/>
</dbReference>
<dbReference type="PANTHER" id="PTHR30372:SF4">
    <property type="entry name" value="LIPID-A-DISACCHARIDE SYNTHASE, MITOCHONDRIAL-RELATED"/>
    <property type="match status" value="1"/>
</dbReference>
<dbReference type="Pfam" id="PF02684">
    <property type="entry name" value="LpxB"/>
    <property type="match status" value="1"/>
</dbReference>
<dbReference type="SUPFAM" id="SSF53756">
    <property type="entry name" value="UDP-Glycosyltransferase/glycogen phosphorylase"/>
    <property type="match status" value="1"/>
</dbReference>
<name>LPXB_GLUOX</name>
<proteinExistence type="inferred from homology"/>